<dbReference type="EMBL" id="U11254">
    <property type="protein sequence ID" value="AAA82210.1"/>
    <property type="molecule type" value="Genomic_DNA"/>
</dbReference>
<dbReference type="EMBL" id="AB013392">
    <property type="status" value="NOT_ANNOTATED_CDS"/>
    <property type="molecule type" value="Genomic_DNA"/>
</dbReference>
<dbReference type="EMBL" id="CP002688">
    <property type="protein sequence ID" value="AED96808.1"/>
    <property type="status" value="ALT_SEQ"/>
    <property type="molecule type" value="Genomic_DNA"/>
</dbReference>
<dbReference type="PIR" id="S57859">
    <property type="entry name" value="S57859"/>
</dbReference>
<dbReference type="RefSeq" id="NP_001032085.2">
    <property type="nucleotide sequence ID" value="NM_001037008.3"/>
</dbReference>
<dbReference type="STRING" id="3702.Q38803"/>
<dbReference type="PeptideAtlas" id="Q38803"/>
<dbReference type="GeneID" id="3771524"/>
<dbReference type="KEGG" id="ath:AT5G56795"/>
<dbReference type="Araport" id="AT5G56795"/>
<dbReference type="TAIR" id="AT5G56795">
    <property type="gene designation" value="MT1B"/>
</dbReference>
<dbReference type="InParanoid" id="Q38803"/>
<dbReference type="Proteomes" id="UP000006548">
    <property type="component" value="Chromosome 5"/>
</dbReference>
<dbReference type="GO" id="GO:0046872">
    <property type="term" value="F:metal ion binding"/>
    <property type="evidence" value="ECO:0000250"/>
    <property type="project" value="TAIR"/>
</dbReference>
<dbReference type="GO" id="GO:0010038">
    <property type="term" value="P:response to metal ion"/>
    <property type="evidence" value="ECO:0000250"/>
    <property type="project" value="TAIR"/>
</dbReference>
<organism>
    <name type="scientific">Arabidopsis thaliana</name>
    <name type="common">Mouse-ear cress</name>
    <dbReference type="NCBI Taxonomy" id="3702"/>
    <lineage>
        <taxon>Eukaryota</taxon>
        <taxon>Viridiplantae</taxon>
        <taxon>Streptophyta</taxon>
        <taxon>Embryophyta</taxon>
        <taxon>Tracheophyta</taxon>
        <taxon>Spermatophyta</taxon>
        <taxon>Magnoliopsida</taxon>
        <taxon>eudicotyledons</taxon>
        <taxon>Gunneridae</taxon>
        <taxon>Pentapetalae</taxon>
        <taxon>rosids</taxon>
        <taxon>malvids</taxon>
        <taxon>Brassicales</taxon>
        <taxon>Brassicaceae</taxon>
        <taxon>Camelineae</taxon>
        <taxon>Arabidopsis</taxon>
    </lineage>
</organism>
<feature type="chain" id="PRO_0000197420" description="Putative metallothionein-like protein 1B">
    <location>
        <begin position="1"/>
        <end position="45"/>
    </location>
</feature>
<keyword id="KW-0479">Metal-binding</keyword>
<keyword id="KW-0480">Metal-thiolate cluster</keyword>
<keyword id="KW-1185">Reference proteome</keyword>
<comment type="function">
    <text evidence="1 2">Metallothioneins have a high content of cysteine residues that bind various heavy metals (Probable). Confers tolerance to cadmium (Cd) and plays a role in Cd and zinc (Zn) homeostasis (PubMed:16240177).</text>
</comment>
<comment type="similarity">
    <text evidence="2">Belongs to the metallothionein superfamily. Type 15 family.</text>
</comment>
<comment type="caution">
    <text evidence="2">Could be the product of a pseudogene.</text>
</comment>
<comment type="sequence caution" evidence="2">
    <conflict type="frameshift">
        <sequence resource="EMBL" id="AB013392"/>
    </conflict>
</comment>
<comment type="sequence caution" evidence="2">
    <conflict type="erroneous gene model prediction">
        <sequence resource="EMBL-CDS" id="AED96808"/>
    </conflict>
</comment>
<comment type="sequence caution" evidence="2">
    <conflict type="frameshift">
        <sequence resource="EMBL-CDS" id="AED96808"/>
    </conflict>
</comment>
<proteinExistence type="uncertain"/>
<gene>
    <name type="primary">MT1B</name>
    <name type="ordered locus">At5g56795</name>
    <name type="ORF">MIK19</name>
</gene>
<sequence>MGLILTRMILNCGCGSSCKCGDSCSCEKNYNKECDNCSCGSNCNF</sequence>
<accession>Q38803</accession>
<accession>A8MQW4</accession>
<reference key="1">
    <citation type="journal article" date="1995" name="Mol. Gen. Genet.">
        <title>Structure, organization and expression of the metallothionein gene family in Arabidopsis.</title>
        <authorList>
            <person name="Zhou J."/>
            <person name="Goldsbrough P.B."/>
        </authorList>
    </citation>
    <scope>NUCLEOTIDE SEQUENCE [GENOMIC DNA]</scope>
    <source>
        <strain>cv. Columbia</strain>
    </source>
</reference>
<reference key="2">
    <citation type="journal article" date="1998" name="DNA Res.">
        <title>Structural analysis of Arabidopsis thaliana chromosome 5. VI. Sequence features of the regions of 1,367,185 bp covered by 19 physically assigned P1 and TAC clones.</title>
        <authorList>
            <person name="Kotani H."/>
            <person name="Nakamura Y."/>
            <person name="Sato S."/>
            <person name="Asamizu E."/>
            <person name="Kaneko T."/>
            <person name="Miyajima N."/>
            <person name="Tabata S."/>
        </authorList>
    </citation>
    <scope>NUCLEOTIDE SEQUENCE [LARGE SCALE GENOMIC DNA]</scope>
    <source>
        <strain>cv. Columbia</strain>
    </source>
</reference>
<reference key="3">
    <citation type="journal article" date="2017" name="Plant J.">
        <title>Araport11: a complete reannotation of the Arabidopsis thaliana reference genome.</title>
        <authorList>
            <person name="Cheng C.Y."/>
            <person name="Krishnakumar V."/>
            <person name="Chan A.P."/>
            <person name="Thibaud-Nissen F."/>
            <person name="Schobel S."/>
            <person name="Town C.D."/>
        </authorList>
    </citation>
    <scope>GENOME REANNOTATION</scope>
    <source>
        <strain>cv. Columbia</strain>
    </source>
</reference>
<reference key="4">
    <citation type="journal article" date="2005" name="Plant Mol. Biol.">
        <title>The plant MT1 metallothioneins are stabilized by binding cadmiums and are required for cadmium tolerance and accumulation.</title>
        <authorList>
            <person name="Zimeri A.M."/>
            <person name="Dhankher O.P."/>
            <person name="McCaig B."/>
            <person name="Meagher R.B."/>
        </authorList>
    </citation>
    <scope>FUNCTION</scope>
</reference>
<evidence type="ECO:0000269" key="1">
    <source>
    </source>
</evidence>
<evidence type="ECO:0000305" key="2"/>
<protein>
    <recommendedName>
        <fullName>Putative metallothionein-like protein 1B</fullName>
        <shortName>MT-1B</shortName>
    </recommendedName>
</protein>
<name>MT1B_ARATH</name>